<reference key="1">
    <citation type="journal article" date="2009" name="J. Bacteriol.">
        <title>Genomic sequencing reveals regulatory mutations and recombinational events in the widely used MC4100 lineage of Escherichia coli K-12.</title>
        <authorList>
            <person name="Ferenci T."/>
            <person name="Zhou Z."/>
            <person name="Betteridge T."/>
            <person name="Ren Y."/>
            <person name="Liu Y."/>
            <person name="Feng L."/>
            <person name="Reeves P.R."/>
            <person name="Wang L."/>
        </authorList>
    </citation>
    <scope>NUCLEOTIDE SEQUENCE [LARGE SCALE GENOMIC DNA]</scope>
    <source>
        <strain>K12 / MC4100 / BW2952</strain>
    </source>
</reference>
<evidence type="ECO:0000255" key="1">
    <source>
        <dbReference type="HAMAP-Rule" id="MF_01310"/>
    </source>
</evidence>
<evidence type="ECO:0000305" key="2"/>
<gene>
    <name evidence="1" type="primary">rpsK</name>
    <name type="ordered locus">BWG_2988</name>
</gene>
<name>RS11_ECOBW</name>
<sequence>MAKAPIRARKRVRKQVSDGVAHIHASFNNTIVTITDRQGNALGWATAGGSGFRGSRKSTPFAAQVAAERCADAVKEYGIKNLEVMVKGPGPGRESTIRALNAAGFRITNITDVTPIPHNGCRPPKKRRV</sequence>
<dbReference type="EMBL" id="CP001396">
    <property type="protein sequence ID" value="ACR61783.1"/>
    <property type="molecule type" value="Genomic_DNA"/>
</dbReference>
<dbReference type="RefSeq" id="WP_001029684.1">
    <property type="nucleotide sequence ID" value="NC_012759.1"/>
</dbReference>
<dbReference type="SMR" id="C4ZUF2"/>
<dbReference type="GeneID" id="93778690"/>
<dbReference type="KEGG" id="ebw:BWG_2988"/>
<dbReference type="HOGENOM" id="CLU_072439_5_0_6"/>
<dbReference type="GO" id="GO:1990904">
    <property type="term" value="C:ribonucleoprotein complex"/>
    <property type="evidence" value="ECO:0007669"/>
    <property type="project" value="UniProtKB-KW"/>
</dbReference>
<dbReference type="GO" id="GO:0005840">
    <property type="term" value="C:ribosome"/>
    <property type="evidence" value="ECO:0007669"/>
    <property type="project" value="UniProtKB-KW"/>
</dbReference>
<dbReference type="GO" id="GO:0019843">
    <property type="term" value="F:rRNA binding"/>
    <property type="evidence" value="ECO:0007669"/>
    <property type="project" value="UniProtKB-UniRule"/>
</dbReference>
<dbReference type="GO" id="GO:0003735">
    <property type="term" value="F:structural constituent of ribosome"/>
    <property type="evidence" value="ECO:0007669"/>
    <property type="project" value="InterPro"/>
</dbReference>
<dbReference type="GO" id="GO:0006412">
    <property type="term" value="P:translation"/>
    <property type="evidence" value="ECO:0007669"/>
    <property type="project" value="UniProtKB-UniRule"/>
</dbReference>
<dbReference type="FunFam" id="3.30.420.80:FF:000001">
    <property type="entry name" value="30S ribosomal protein S11"/>
    <property type="match status" value="1"/>
</dbReference>
<dbReference type="Gene3D" id="3.30.420.80">
    <property type="entry name" value="Ribosomal protein S11"/>
    <property type="match status" value="1"/>
</dbReference>
<dbReference type="HAMAP" id="MF_01310">
    <property type="entry name" value="Ribosomal_uS11"/>
    <property type="match status" value="1"/>
</dbReference>
<dbReference type="InterPro" id="IPR001971">
    <property type="entry name" value="Ribosomal_uS11"/>
</dbReference>
<dbReference type="InterPro" id="IPR019981">
    <property type="entry name" value="Ribosomal_uS11_bac-type"/>
</dbReference>
<dbReference type="InterPro" id="IPR018102">
    <property type="entry name" value="Ribosomal_uS11_CS"/>
</dbReference>
<dbReference type="InterPro" id="IPR036967">
    <property type="entry name" value="Ribosomal_uS11_sf"/>
</dbReference>
<dbReference type="NCBIfam" id="NF003698">
    <property type="entry name" value="PRK05309.1"/>
    <property type="match status" value="1"/>
</dbReference>
<dbReference type="NCBIfam" id="TIGR03632">
    <property type="entry name" value="uS11_bact"/>
    <property type="match status" value="1"/>
</dbReference>
<dbReference type="PANTHER" id="PTHR11759">
    <property type="entry name" value="40S RIBOSOMAL PROTEIN S14/30S RIBOSOMAL PROTEIN S11"/>
    <property type="match status" value="1"/>
</dbReference>
<dbReference type="Pfam" id="PF00411">
    <property type="entry name" value="Ribosomal_S11"/>
    <property type="match status" value="1"/>
</dbReference>
<dbReference type="PIRSF" id="PIRSF002131">
    <property type="entry name" value="Ribosomal_S11"/>
    <property type="match status" value="1"/>
</dbReference>
<dbReference type="SUPFAM" id="SSF53137">
    <property type="entry name" value="Translational machinery components"/>
    <property type="match status" value="1"/>
</dbReference>
<dbReference type="PROSITE" id="PS00054">
    <property type="entry name" value="RIBOSOMAL_S11"/>
    <property type="match status" value="1"/>
</dbReference>
<protein>
    <recommendedName>
        <fullName evidence="1">Small ribosomal subunit protein uS11</fullName>
    </recommendedName>
    <alternativeName>
        <fullName evidence="2">30S ribosomal protein S11</fullName>
    </alternativeName>
</protein>
<comment type="function">
    <text evidence="1">Located on the platform of the 30S subunit, it bridges several disparate RNA helices of the 16S rRNA. Forms part of the Shine-Dalgarno cleft in the 70S ribosome.</text>
</comment>
<comment type="subunit">
    <text evidence="1">Part of the 30S ribosomal subunit. Interacts with proteins S7 and S18. Binds to IF-3.</text>
</comment>
<comment type="similarity">
    <text evidence="1">Belongs to the universal ribosomal protein uS11 family.</text>
</comment>
<proteinExistence type="inferred from homology"/>
<keyword id="KW-0687">Ribonucleoprotein</keyword>
<keyword id="KW-0689">Ribosomal protein</keyword>
<keyword id="KW-0694">RNA-binding</keyword>
<keyword id="KW-0699">rRNA-binding</keyword>
<organism>
    <name type="scientific">Escherichia coli (strain K12 / MC4100 / BW2952)</name>
    <dbReference type="NCBI Taxonomy" id="595496"/>
    <lineage>
        <taxon>Bacteria</taxon>
        <taxon>Pseudomonadati</taxon>
        <taxon>Pseudomonadota</taxon>
        <taxon>Gammaproteobacteria</taxon>
        <taxon>Enterobacterales</taxon>
        <taxon>Enterobacteriaceae</taxon>
        <taxon>Escherichia</taxon>
    </lineage>
</organism>
<accession>C4ZUF2</accession>
<feature type="chain" id="PRO_1000214361" description="Small ribosomal subunit protein uS11">
    <location>
        <begin position="1"/>
        <end position="129"/>
    </location>
</feature>